<accession>Q7TZ12</accession>
<accession>A0A1R3Y0B9</accession>
<accession>X2BK62</accession>
<comment type="function">
    <text evidence="1">Protein modifier that is covalently attached to lysine residues of substrate proteins, thereby targeting them for proteasomal degradation. The tagging system is termed pupylation.</text>
</comment>
<comment type="pathway">
    <text evidence="1">Protein degradation; proteasomal Pup-dependent pathway.</text>
</comment>
<comment type="subunit">
    <text evidence="1">Strongly interacts with the proteasome-associated ATPase ARC through a hydrophobic interface; the interacting region of Pup lies in its C-terminal half. There is one Pup binding site per ARC hexamer ring.</text>
</comment>
<comment type="domain">
    <text evidence="1">The N-terminal unstructured half of Pup provides a signal required to initiate unfolding and degradation by the proteasome but is not needed for pupylation, while the C-terminal helical half of Pup interacts with ARC to target proteins to the proteasome.</text>
</comment>
<comment type="PTM">
    <text evidence="1">Is modified by deamidation of its C-terminal glutamine to glutamate by the deamidase Dop, a prerequisite to the subsequent pupylation process.</text>
</comment>
<comment type="similarity">
    <text evidence="1">Belongs to the prokaryotic ubiquitin-like protein family.</text>
</comment>
<proteinExistence type="inferred from homology"/>
<protein>
    <recommendedName>
        <fullName evidence="1">Prokaryotic ubiquitin-like protein Pup</fullName>
    </recommendedName>
    <alternativeName>
        <fullName evidence="1">Bacterial ubiquitin-like modifier</fullName>
    </alternativeName>
</protein>
<evidence type="ECO:0000255" key="1">
    <source>
        <dbReference type="HAMAP-Rule" id="MF_02106"/>
    </source>
</evidence>
<evidence type="ECO:0000256" key="2">
    <source>
        <dbReference type="SAM" id="MobiDB-lite"/>
    </source>
</evidence>
<organism>
    <name type="scientific">Mycobacterium bovis (strain ATCC BAA-935 / AF2122/97)</name>
    <dbReference type="NCBI Taxonomy" id="233413"/>
    <lineage>
        <taxon>Bacteria</taxon>
        <taxon>Bacillati</taxon>
        <taxon>Actinomycetota</taxon>
        <taxon>Actinomycetes</taxon>
        <taxon>Mycobacteriales</taxon>
        <taxon>Mycobacteriaceae</taxon>
        <taxon>Mycobacterium</taxon>
        <taxon>Mycobacterium tuberculosis complex</taxon>
    </lineage>
</organism>
<gene>
    <name evidence="1" type="primary">pup</name>
    <name type="ordered locus">BQ2027_MB2135C</name>
</gene>
<keyword id="KW-0175">Coiled coil</keyword>
<keyword id="KW-1017">Isopeptide bond</keyword>
<keyword id="KW-1185">Reference proteome</keyword>
<keyword id="KW-0833">Ubl conjugation pathway</keyword>
<dbReference type="EMBL" id="LT708304">
    <property type="protein sequence ID" value="SIU00742.1"/>
    <property type="molecule type" value="Genomic_DNA"/>
</dbReference>
<dbReference type="RefSeq" id="NP_855784.1">
    <property type="nucleotide sequence ID" value="NC_002945.3"/>
</dbReference>
<dbReference type="RefSeq" id="WP_003411026.1">
    <property type="nucleotide sequence ID" value="NC_002945.4"/>
</dbReference>
<dbReference type="SMR" id="Q7TZ12"/>
<dbReference type="KEGG" id="mbo:BQ2027_MB2135C"/>
<dbReference type="PATRIC" id="fig|233413.5.peg.2348"/>
<dbReference type="UniPathway" id="UPA00997"/>
<dbReference type="Proteomes" id="UP000001419">
    <property type="component" value="Chromosome"/>
</dbReference>
<dbReference type="GO" id="GO:0070628">
    <property type="term" value="F:proteasome binding"/>
    <property type="evidence" value="ECO:0007669"/>
    <property type="project" value="UniProtKB-UniRule"/>
</dbReference>
<dbReference type="GO" id="GO:0031386">
    <property type="term" value="F:protein tag activity"/>
    <property type="evidence" value="ECO:0007669"/>
    <property type="project" value="UniProtKB-UniRule"/>
</dbReference>
<dbReference type="GO" id="GO:0019941">
    <property type="term" value="P:modification-dependent protein catabolic process"/>
    <property type="evidence" value="ECO:0007669"/>
    <property type="project" value="UniProtKB-UniRule"/>
</dbReference>
<dbReference type="GO" id="GO:0010498">
    <property type="term" value="P:proteasomal protein catabolic process"/>
    <property type="evidence" value="ECO:0007669"/>
    <property type="project" value="UniProtKB-UniRule"/>
</dbReference>
<dbReference type="GO" id="GO:0070490">
    <property type="term" value="P:protein pupylation"/>
    <property type="evidence" value="ECO:0007669"/>
    <property type="project" value="UniProtKB-UniRule"/>
</dbReference>
<dbReference type="HAMAP" id="MF_02106">
    <property type="entry name" value="Pup"/>
    <property type="match status" value="1"/>
</dbReference>
<dbReference type="InterPro" id="IPR008515">
    <property type="entry name" value="Ubiquitin-like_Pup"/>
</dbReference>
<dbReference type="NCBIfam" id="TIGR03687">
    <property type="entry name" value="pupylate_cterm"/>
    <property type="match status" value="1"/>
</dbReference>
<dbReference type="Pfam" id="PF05639">
    <property type="entry name" value="Pup"/>
    <property type="match status" value="1"/>
</dbReference>
<feature type="chain" id="PRO_0000390588" description="Prokaryotic ubiquitin-like protein Pup">
    <location>
        <begin position="1"/>
        <end position="64"/>
    </location>
</feature>
<feature type="region of interest" description="Disordered" evidence="2">
    <location>
        <begin position="1"/>
        <end position="37"/>
    </location>
</feature>
<feature type="region of interest" description="ARC ATPase binding" evidence="1">
    <location>
        <begin position="21"/>
        <end position="58"/>
    </location>
</feature>
<feature type="coiled-coil region" evidence="1">
    <location>
        <begin position="23"/>
        <end position="52"/>
    </location>
</feature>
<feature type="modified residue" description="Deamidated glutamine" evidence="1">
    <location>
        <position position="64"/>
    </location>
</feature>
<feature type="cross-link" description="Isoglutamyl lysine isopeptide (Gln-Lys) (interchain with K-? in acceptor proteins)" evidence="1">
    <location>
        <position position="64"/>
    </location>
</feature>
<name>PUP_MYCBO</name>
<sequence length="64" mass="6944">MAQEQTKRGGGGGDDDDIAGSTAAGQERREKLTEETDDLLDEIDDVLEENAEDFVRAYVQKGGQ</sequence>
<reference key="1">
    <citation type="journal article" date="2003" name="Proc. Natl. Acad. Sci. U.S.A.">
        <title>The complete genome sequence of Mycobacterium bovis.</title>
        <authorList>
            <person name="Garnier T."/>
            <person name="Eiglmeier K."/>
            <person name="Camus J.-C."/>
            <person name="Medina N."/>
            <person name="Mansoor H."/>
            <person name="Pryor M."/>
            <person name="Duthoy S."/>
            <person name="Grondin S."/>
            <person name="Lacroix C."/>
            <person name="Monsempe C."/>
            <person name="Simon S."/>
            <person name="Harris B."/>
            <person name="Atkin R."/>
            <person name="Doggett J."/>
            <person name="Mayes R."/>
            <person name="Keating L."/>
            <person name="Wheeler P.R."/>
            <person name="Parkhill J."/>
            <person name="Barrell B.G."/>
            <person name="Cole S.T."/>
            <person name="Gordon S.V."/>
            <person name="Hewinson R.G."/>
        </authorList>
    </citation>
    <scope>NUCLEOTIDE SEQUENCE [LARGE SCALE GENOMIC DNA]</scope>
    <source>
        <strain>ATCC BAA-935 / AF2122/97</strain>
    </source>
</reference>
<reference key="2">
    <citation type="journal article" date="2017" name="Genome Announc.">
        <title>Updated reference genome sequence and annotation of Mycobacterium bovis AF2122/97.</title>
        <authorList>
            <person name="Malone K.M."/>
            <person name="Farrell D."/>
            <person name="Stuber T.P."/>
            <person name="Schubert O.T."/>
            <person name="Aebersold R."/>
            <person name="Robbe-Austerman S."/>
            <person name="Gordon S.V."/>
        </authorList>
    </citation>
    <scope>NUCLEOTIDE SEQUENCE [LARGE SCALE GENOMIC DNA]</scope>
    <scope>GENOME REANNOTATION</scope>
    <source>
        <strain>ATCC BAA-935 / AF2122/97</strain>
    </source>
</reference>